<organism>
    <name type="scientific">Arabidopsis thaliana</name>
    <name type="common">Mouse-ear cress</name>
    <dbReference type="NCBI Taxonomy" id="3702"/>
    <lineage>
        <taxon>Eukaryota</taxon>
        <taxon>Viridiplantae</taxon>
        <taxon>Streptophyta</taxon>
        <taxon>Embryophyta</taxon>
        <taxon>Tracheophyta</taxon>
        <taxon>Spermatophyta</taxon>
        <taxon>Magnoliopsida</taxon>
        <taxon>eudicotyledons</taxon>
        <taxon>Gunneridae</taxon>
        <taxon>Pentapetalae</taxon>
        <taxon>rosids</taxon>
        <taxon>malvids</taxon>
        <taxon>Brassicales</taxon>
        <taxon>Brassicaceae</taxon>
        <taxon>Camelineae</taxon>
        <taxon>Arabidopsis</taxon>
    </lineage>
</organism>
<sequence length="227" mass="25307">MASSDVKLIGAWASPFVMRPRIALNLKSVPYEFLQETFGSKSELLLKSNPVHKKIPVLLHADKPVSESNIIVEYIDDTWSSSGPSILPSDPYDRAMARFWAAYIDEKWFVALRGFLKAGGEEEKKAVIAQLEEGNAFLEKAFIDCSKGKPFFNGDNIGYLDIALGCFLAWLRVTELAVSYKILDEAKTPSLSKWAENFCNDPAVKPVMPETAKLAEFAKKIFPKPQA</sequence>
<reference key="1">
    <citation type="journal article" date="1994" name="Plant Mol. Biol.">
        <title>Cloning of cDNAs for genes that are early-responsive to dehydration stress (ERDs) in Arabidopsis thaliana L.: identification of three ERDs as HSP cognate genes.</title>
        <authorList>
            <person name="Kiyosue T."/>
            <person name="Yamaguchi-shinozaki K."/>
            <person name="Shinozaki K."/>
        </authorList>
    </citation>
    <scope>NUCLEOTIDE SEQUENCE [MRNA]</scope>
    <scope>INDUCTION</scope>
    <source>
        <strain>cv. Columbia</strain>
    </source>
</reference>
<reference key="2">
    <citation type="journal article" date="2002" name="Plant Mol. Biol.">
        <title>Probing the diversity of the Arabidopsis glutathione S-transferase gene family.</title>
        <authorList>
            <person name="Wagner U."/>
            <person name="Edwards R."/>
            <person name="Dixon D.P."/>
            <person name="Mauch F."/>
        </authorList>
    </citation>
    <scope>NUCLEOTIDE SEQUENCE [MRNA]</scope>
    <scope>GENE FAMILY</scope>
    <scope>NOMENCLATURE</scope>
    <source>
        <strain>cv. Columbia</strain>
    </source>
</reference>
<reference key="3">
    <citation type="journal article" date="2000" name="Nature">
        <title>Sequence and analysis of chromosome 1 of the plant Arabidopsis thaliana.</title>
        <authorList>
            <person name="Theologis A."/>
            <person name="Ecker J.R."/>
            <person name="Palm C.J."/>
            <person name="Federspiel N.A."/>
            <person name="Kaul S."/>
            <person name="White O."/>
            <person name="Alonso J."/>
            <person name="Altafi H."/>
            <person name="Araujo R."/>
            <person name="Bowman C.L."/>
            <person name="Brooks S.Y."/>
            <person name="Buehler E."/>
            <person name="Chan A."/>
            <person name="Chao Q."/>
            <person name="Chen H."/>
            <person name="Cheuk R.F."/>
            <person name="Chin C.W."/>
            <person name="Chung M.K."/>
            <person name="Conn L."/>
            <person name="Conway A.B."/>
            <person name="Conway A.R."/>
            <person name="Creasy T.H."/>
            <person name="Dewar K."/>
            <person name="Dunn P."/>
            <person name="Etgu P."/>
            <person name="Feldblyum T.V."/>
            <person name="Feng J.-D."/>
            <person name="Fong B."/>
            <person name="Fujii C.Y."/>
            <person name="Gill J.E."/>
            <person name="Goldsmith A.D."/>
            <person name="Haas B."/>
            <person name="Hansen N.F."/>
            <person name="Hughes B."/>
            <person name="Huizar L."/>
            <person name="Hunter J.L."/>
            <person name="Jenkins J."/>
            <person name="Johnson-Hopson C."/>
            <person name="Khan S."/>
            <person name="Khaykin E."/>
            <person name="Kim C.J."/>
            <person name="Koo H.L."/>
            <person name="Kremenetskaia I."/>
            <person name="Kurtz D.B."/>
            <person name="Kwan A."/>
            <person name="Lam B."/>
            <person name="Langin-Hooper S."/>
            <person name="Lee A."/>
            <person name="Lee J.M."/>
            <person name="Lenz C.A."/>
            <person name="Li J.H."/>
            <person name="Li Y.-P."/>
            <person name="Lin X."/>
            <person name="Liu S.X."/>
            <person name="Liu Z.A."/>
            <person name="Luros J.S."/>
            <person name="Maiti R."/>
            <person name="Marziali A."/>
            <person name="Militscher J."/>
            <person name="Miranda M."/>
            <person name="Nguyen M."/>
            <person name="Nierman W.C."/>
            <person name="Osborne B.I."/>
            <person name="Pai G."/>
            <person name="Peterson J."/>
            <person name="Pham P.K."/>
            <person name="Rizzo M."/>
            <person name="Rooney T."/>
            <person name="Rowley D."/>
            <person name="Sakano H."/>
            <person name="Salzberg S.L."/>
            <person name="Schwartz J.R."/>
            <person name="Shinn P."/>
            <person name="Southwick A.M."/>
            <person name="Sun H."/>
            <person name="Tallon L.J."/>
            <person name="Tambunga G."/>
            <person name="Toriumi M.J."/>
            <person name="Town C.D."/>
            <person name="Utterback T."/>
            <person name="Van Aken S."/>
            <person name="Vaysberg M."/>
            <person name="Vysotskaia V.S."/>
            <person name="Walker M."/>
            <person name="Wu D."/>
            <person name="Yu G."/>
            <person name="Fraser C.M."/>
            <person name="Venter J.C."/>
            <person name="Davis R.W."/>
        </authorList>
    </citation>
    <scope>NUCLEOTIDE SEQUENCE [LARGE SCALE GENOMIC DNA]</scope>
    <source>
        <strain>cv. Columbia</strain>
    </source>
</reference>
<reference key="4">
    <citation type="journal article" date="2017" name="Plant J.">
        <title>Araport11: a complete reannotation of the Arabidopsis thaliana reference genome.</title>
        <authorList>
            <person name="Cheng C.Y."/>
            <person name="Krishnakumar V."/>
            <person name="Chan A.P."/>
            <person name="Thibaud-Nissen F."/>
            <person name="Schobel S."/>
            <person name="Town C.D."/>
        </authorList>
    </citation>
    <scope>GENOME REANNOTATION</scope>
    <source>
        <strain>cv. Columbia</strain>
    </source>
</reference>
<reference key="5">
    <citation type="submission" date="2005-07" db="EMBL/GenBank/DDBJ databases">
        <title>Arabidopsis ORF clones.</title>
        <authorList>
            <person name="Cheuk R.F."/>
            <person name="Chen H."/>
            <person name="Kim C.J."/>
            <person name="Shinn P."/>
            <person name="Ecker J.R."/>
        </authorList>
    </citation>
    <scope>NUCLEOTIDE SEQUENCE [LARGE SCALE MRNA]</scope>
    <source>
        <strain>cv. Columbia</strain>
    </source>
</reference>
<reference key="6">
    <citation type="journal article" date="1994" name="Plant Physiol.">
        <title>Ozone-induced expression of stress-related genes in Arabidopsis thaliana.</title>
        <authorList>
            <person name="Sharma Y.K."/>
            <person name="Davis K.R."/>
        </authorList>
    </citation>
    <scope>INDUCTION</scope>
</reference>
<reference key="7">
    <citation type="journal article" date="2010" name="Plant Physiol.">
        <title>A glutathione S-transferase regulated by light and hormones participates in the modulation of Arabidopsis seedling development.</title>
        <authorList>
            <person name="Jiang H.W."/>
            <person name="Liu M.J."/>
            <person name="Chen I.C."/>
            <person name="Huang C.H."/>
            <person name="Chao L.Y."/>
            <person name="Hsieh H.L."/>
        </authorList>
    </citation>
    <scope>FUNCTION</scope>
    <scope>INDUCTION</scope>
    <scope>DISRUPTION PHENOTYPE</scope>
</reference>
<dbReference type="EC" id="2.5.1.18"/>
<dbReference type="EMBL" id="AB039930">
    <property type="protein sequence ID" value="BAB63917.1"/>
    <property type="molecule type" value="mRNA"/>
</dbReference>
<dbReference type="EMBL" id="AF288191">
    <property type="protein sequence ID" value="AAG30140.1"/>
    <property type="molecule type" value="mRNA"/>
</dbReference>
<dbReference type="EMBL" id="AC005489">
    <property type="protein sequence ID" value="AAD32888.1"/>
    <property type="status" value="ALT_SEQ"/>
    <property type="molecule type" value="Genomic_DNA"/>
</dbReference>
<dbReference type="EMBL" id="CP002684">
    <property type="protein sequence ID" value="AEE28571.1"/>
    <property type="molecule type" value="Genomic_DNA"/>
</dbReference>
<dbReference type="EMBL" id="BT023743">
    <property type="protein sequence ID" value="AAZ23935.1"/>
    <property type="molecule type" value="mRNA"/>
</dbReference>
<dbReference type="RefSeq" id="NP_172508.4">
    <property type="nucleotide sequence ID" value="NM_100911.6"/>
</dbReference>
<dbReference type="SMR" id="Q9FUS8"/>
<dbReference type="FunCoup" id="Q9FUS8">
    <property type="interactions" value="256"/>
</dbReference>
<dbReference type="STRING" id="3702.Q9FUS8"/>
<dbReference type="PaxDb" id="3702-AT1G10370.1"/>
<dbReference type="ProteomicsDB" id="247198"/>
<dbReference type="EnsemblPlants" id="AT1G10370.1">
    <property type="protein sequence ID" value="AT1G10370.1"/>
    <property type="gene ID" value="AT1G10370"/>
</dbReference>
<dbReference type="GeneID" id="837576"/>
<dbReference type="Gramene" id="AT1G10370.1">
    <property type="protein sequence ID" value="AT1G10370.1"/>
    <property type="gene ID" value="AT1G10370"/>
</dbReference>
<dbReference type="KEGG" id="ath:AT1G10370"/>
<dbReference type="Araport" id="AT1G10370"/>
<dbReference type="TAIR" id="AT1G10370">
    <property type="gene designation" value="ERD9"/>
</dbReference>
<dbReference type="eggNOG" id="KOG0406">
    <property type="taxonomic scope" value="Eukaryota"/>
</dbReference>
<dbReference type="HOGENOM" id="CLU_011226_18_0_1"/>
<dbReference type="InParanoid" id="Q9FUS8"/>
<dbReference type="OMA" id="KWAENFC"/>
<dbReference type="OrthoDB" id="4951845at2759"/>
<dbReference type="PhylomeDB" id="Q9FUS8"/>
<dbReference type="BioCyc" id="ARA:AT1G10370-MONOMER"/>
<dbReference type="BRENDA" id="2.5.1.18">
    <property type="organism ID" value="399"/>
</dbReference>
<dbReference type="PRO" id="PR:Q9FUS8"/>
<dbReference type="Proteomes" id="UP000006548">
    <property type="component" value="Chromosome 1"/>
</dbReference>
<dbReference type="ExpressionAtlas" id="Q9FUS8">
    <property type="expression patterns" value="baseline and differential"/>
</dbReference>
<dbReference type="GO" id="GO:0009507">
    <property type="term" value="C:chloroplast"/>
    <property type="evidence" value="ECO:0007005"/>
    <property type="project" value="TAIR"/>
</dbReference>
<dbReference type="GO" id="GO:0005737">
    <property type="term" value="C:cytoplasm"/>
    <property type="evidence" value="ECO:0000303"/>
    <property type="project" value="TAIR"/>
</dbReference>
<dbReference type="GO" id="GO:0005829">
    <property type="term" value="C:cytosol"/>
    <property type="evidence" value="ECO:0007669"/>
    <property type="project" value="UniProtKB-SubCell"/>
</dbReference>
<dbReference type="GO" id="GO:0004364">
    <property type="term" value="F:glutathione transferase activity"/>
    <property type="evidence" value="ECO:0000314"/>
    <property type="project" value="TAIR"/>
</dbReference>
<dbReference type="GO" id="GO:0009704">
    <property type="term" value="P:de-etiolation"/>
    <property type="evidence" value="ECO:0000315"/>
    <property type="project" value="TAIR"/>
</dbReference>
<dbReference type="GO" id="GO:0006749">
    <property type="term" value="P:glutathione metabolic process"/>
    <property type="evidence" value="ECO:0000315"/>
    <property type="project" value="TAIR"/>
</dbReference>
<dbReference type="GO" id="GO:0048527">
    <property type="term" value="P:lateral root development"/>
    <property type="evidence" value="ECO:0000315"/>
    <property type="project" value="TAIR"/>
</dbReference>
<dbReference type="GO" id="GO:0080148">
    <property type="term" value="P:negative regulation of response to water deprivation"/>
    <property type="evidence" value="ECO:0000315"/>
    <property type="project" value="TAIR"/>
</dbReference>
<dbReference type="GO" id="GO:0060416">
    <property type="term" value="P:response to growth hormone"/>
    <property type="evidence" value="ECO:0000270"/>
    <property type="project" value="TAIR"/>
</dbReference>
<dbReference type="GO" id="GO:0009651">
    <property type="term" value="P:response to salt stress"/>
    <property type="evidence" value="ECO:0000315"/>
    <property type="project" value="TAIR"/>
</dbReference>
<dbReference type="GO" id="GO:0009407">
    <property type="term" value="P:toxin catabolic process"/>
    <property type="evidence" value="ECO:0000304"/>
    <property type="project" value="TAIR"/>
</dbReference>
<dbReference type="CDD" id="cd03185">
    <property type="entry name" value="GST_C_Tau"/>
    <property type="match status" value="1"/>
</dbReference>
<dbReference type="CDD" id="cd03058">
    <property type="entry name" value="GST_N_Tau"/>
    <property type="match status" value="1"/>
</dbReference>
<dbReference type="FunFam" id="3.40.30.10:FF:000044">
    <property type="entry name" value="Glutathione S-transferase GSTU6"/>
    <property type="match status" value="1"/>
</dbReference>
<dbReference type="FunFam" id="1.20.1050.10:FF:000016">
    <property type="entry name" value="Glutathione S-transferase U9"/>
    <property type="match status" value="1"/>
</dbReference>
<dbReference type="Gene3D" id="1.20.1050.10">
    <property type="match status" value="1"/>
</dbReference>
<dbReference type="Gene3D" id="3.40.30.10">
    <property type="entry name" value="Glutaredoxin"/>
    <property type="match status" value="1"/>
</dbReference>
<dbReference type="InterPro" id="IPR010987">
    <property type="entry name" value="Glutathione-S-Trfase_C-like"/>
</dbReference>
<dbReference type="InterPro" id="IPR036282">
    <property type="entry name" value="Glutathione-S-Trfase_C_sf"/>
</dbReference>
<dbReference type="InterPro" id="IPR040079">
    <property type="entry name" value="Glutathione_S-Trfase"/>
</dbReference>
<dbReference type="InterPro" id="IPR004045">
    <property type="entry name" value="Glutathione_S-Trfase_N"/>
</dbReference>
<dbReference type="InterPro" id="IPR004046">
    <property type="entry name" value="GST_C"/>
</dbReference>
<dbReference type="InterPro" id="IPR045074">
    <property type="entry name" value="GST_C_Tau"/>
</dbReference>
<dbReference type="InterPro" id="IPR045073">
    <property type="entry name" value="Omega/Tau-like"/>
</dbReference>
<dbReference type="InterPro" id="IPR036249">
    <property type="entry name" value="Thioredoxin-like_sf"/>
</dbReference>
<dbReference type="PANTHER" id="PTHR11260:SF615">
    <property type="entry name" value="GLUTATHIONE S-TRANSFERASE U17"/>
    <property type="match status" value="1"/>
</dbReference>
<dbReference type="PANTHER" id="PTHR11260">
    <property type="entry name" value="GLUTATHIONE S-TRANSFERASE, GST, SUPERFAMILY, GST DOMAIN CONTAINING"/>
    <property type="match status" value="1"/>
</dbReference>
<dbReference type="Pfam" id="PF00043">
    <property type="entry name" value="GST_C"/>
    <property type="match status" value="1"/>
</dbReference>
<dbReference type="Pfam" id="PF02798">
    <property type="entry name" value="GST_N"/>
    <property type="match status" value="1"/>
</dbReference>
<dbReference type="SFLD" id="SFLDS00019">
    <property type="entry name" value="Glutathione_Transferase_(cytos"/>
    <property type="match status" value="1"/>
</dbReference>
<dbReference type="SFLD" id="SFLDG01152">
    <property type="entry name" value="Main.3:_Omega-_and_Tau-like"/>
    <property type="match status" value="1"/>
</dbReference>
<dbReference type="SUPFAM" id="SSF47616">
    <property type="entry name" value="GST C-terminal domain-like"/>
    <property type="match status" value="1"/>
</dbReference>
<dbReference type="SUPFAM" id="SSF52833">
    <property type="entry name" value="Thioredoxin-like"/>
    <property type="match status" value="1"/>
</dbReference>
<dbReference type="PROSITE" id="PS50405">
    <property type="entry name" value="GST_CTER"/>
    <property type="match status" value="1"/>
</dbReference>
<dbReference type="PROSITE" id="PS50404">
    <property type="entry name" value="GST_NTER"/>
    <property type="match status" value="1"/>
</dbReference>
<name>GSTUH_ARATH</name>
<feature type="chain" id="PRO_0000413563" description="Glutathione S-transferase U17">
    <location>
        <begin position="1"/>
        <end position="227"/>
    </location>
</feature>
<feature type="domain" description="GST N-terminal">
    <location>
        <begin position="4"/>
        <end position="83"/>
    </location>
</feature>
<feature type="domain" description="GST C-terminal">
    <location>
        <begin position="90"/>
        <end position="222"/>
    </location>
</feature>
<feature type="binding site" evidence="1">
    <location>
        <begin position="14"/>
        <end position="15"/>
    </location>
    <ligand>
        <name>glutathione</name>
        <dbReference type="ChEBI" id="CHEBI:57925"/>
    </ligand>
</feature>
<feature type="binding site" evidence="1">
    <location>
        <begin position="40"/>
        <end position="41"/>
    </location>
    <ligand>
        <name>glutathione</name>
        <dbReference type="ChEBI" id="CHEBI:57925"/>
    </ligand>
</feature>
<feature type="binding site" evidence="1">
    <location>
        <begin position="54"/>
        <end position="55"/>
    </location>
    <ligand>
        <name>glutathione</name>
        <dbReference type="ChEBI" id="CHEBI:57925"/>
    </ligand>
</feature>
<feature type="binding site" evidence="1">
    <location>
        <begin position="67"/>
        <end position="68"/>
    </location>
    <ligand>
        <name>glutathione</name>
        <dbReference type="ChEBI" id="CHEBI:57925"/>
    </ligand>
</feature>
<feature type="sequence conflict" description="In Ref. 1; BAB63917." evidence="5" ref="1">
    <original>F</original>
    <variation>S</variation>
    <location>
        <position position="151"/>
    </location>
</feature>
<feature type="sequence conflict" description="In Ref. 1; BAB63917." evidence="5" ref="1">
    <original>D</original>
    <variation>N</variation>
    <location>
        <position position="161"/>
    </location>
</feature>
<accession>Q9FUS8</accession>
<accession>Q94II0</accession>
<accession>Q9SY80</accession>
<gene>
    <name type="primary">GSTU17</name>
    <name type="synonym">ERD9</name>
    <name type="synonym">GST30</name>
    <name type="synonym">GST30B</name>
    <name type="ordered locus">At1g10370</name>
    <name type="ORF">F14N23.26</name>
</gene>
<comment type="function">
    <text evidence="3">Involved in light signaling, mainly phyA-mediated photomorphogenesis and in the integration of various phytohormone signals to modulate various aspects of plant development by affecting glutathione pools. In vitro, possesses glutathione S-transferase activity toward 1-chloro-2,4-dinitrobenzene (CDNB) and benzyl isothiocyanate (BITC).</text>
</comment>
<comment type="catalytic activity">
    <reaction>
        <text>RX + glutathione = an S-substituted glutathione + a halide anion + H(+)</text>
        <dbReference type="Rhea" id="RHEA:16437"/>
        <dbReference type="ChEBI" id="CHEBI:15378"/>
        <dbReference type="ChEBI" id="CHEBI:16042"/>
        <dbReference type="ChEBI" id="CHEBI:17792"/>
        <dbReference type="ChEBI" id="CHEBI:57925"/>
        <dbReference type="ChEBI" id="CHEBI:90779"/>
        <dbReference type="EC" id="2.5.1.18"/>
    </reaction>
</comment>
<comment type="subcellular location">
    <subcellularLocation>
        <location evidence="5">Cytoplasm</location>
        <location evidence="5">Cytosol</location>
    </subcellularLocation>
</comment>
<comment type="induction">
    <text evidence="2 3 4">By dehydration stress, auxin, abscisic acid (ABA), jasmonate, ozone and transition from dark to far-red and red light.</text>
</comment>
<comment type="disruption phenotype">
    <text evidence="3">Delayed flowering, long-hypocotyl phenotype under low fluences of far-red light and insensitive to ABA-mediated inhibition of root elongation.</text>
</comment>
<comment type="similarity">
    <text evidence="5">Belongs to the GST superfamily. Tau family.</text>
</comment>
<comment type="sequence caution" evidence="5">
    <conflict type="erroneous gene model prediction">
        <sequence resource="EMBL-CDS" id="AAD32888"/>
    </conflict>
</comment>
<keyword id="KW-0963">Cytoplasm</keyword>
<keyword id="KW-0216">Detoxification</keyword>
<keyword id="KW-0341">Growth regulation</keyword>
<keyword id="KW-1185">Reference proteome</keyword>
<keyword id="KW-0346">Stress response</keyword>
<keyword id="KW-0808">Transferase</keyword>
<evidence type="ECO:0000250" key="1"/>
<evidence type="ECO:0000269" key="2">
    <source>
    </source>
</evidence>
<evidence type="ECO:0000269" key="3">
    <source>
    </source>
</evidence>
<evidence type="ECO:0000269" key="4">
    <source>
    </source>
</evidence>
<evidence type="ECO:0000305" key="5"/>
<protein>
    <recommendedName>
        <fullName>Glutathione S-transferase U17</fullName>
        <shortName>AtGSTU17</shortName>
        <ecNumber>2.5.1.18</ecNumber>
    </recommendedName>
    <alternativeName>
        <fullName>GST class-tau member 17</fullName>
    </alternativeName>
    <alternativeName>
        <fullName>Glutathione S-transferase 30</fullName>
    </alternativeName>
    <alternativeName>
        <fullName>Protein EARLY RESPONSIVE TO DEHYDRATION 9</fullName>
    </alternativeName>
</protein>
<proteinExistence type="evidence at transcript level"/>